<accession>Q68XX2</accession>
<sequence length="1135" mass="125458">MALFPRGILIALVLSFVLNLGLVTKIHAKDTLDSIIDILSGLTCETQGVGDLMRTEFSHTCIVAPFFTFAVMNLVSPVLYMNTFLKLKINDSDLFNDSNFGNFPGGQCTRENRIDPKNPELHFALCSNAKLIVSRAKSVTESALAIAKAVLTWSDPWDDIKQAWENKKKEYHIPYRGKPGDDGFAFDVGFPVIYWKVIQDRDRICVSTKGFTGDVPVGCKYMKEPFPKSIYNSFIDVEDKNFIKDSTNDTPSDPLALVSCSAAGDGCYQKAYNASKTAIVMTSPLIECIRQMIARLLISKDVCSFDNVDQVVNLASRQDSALFQFQVGMHKIVTAFLTLYVMFFGFKLLLAGKVPPKSEYINFILKIIFVTYFSIGININPSNGSQYDRLDGMIQWVFPFLLNGISGLANWVMNAAPSGLCKFNNISYDKSVSYIALWDALDCRVAHYLGLDILSTLLVENSYRSHDFLNFDFFSFSAPPYIYLIIPAIISGNMMLVSLALSYPLLVISVAAFMVNATIMCMISIVILGILAPLFVPMFLFAYTRNYFDSWVKLMISFLLQPMVVVTFMITMFAVYDYGFYGKCQYKSKLIHNSIEDKMQGGIKSKRDVLIFYINNDWDDTSQYPDKDSVESCKNSLGYMLNNPINTAFNFAKDNISEIVNSKPGETTTDEFLSKFQFLSGVVLGPGMFFMSPKVLFEKIKNIFLALITACFTLYLMYNFSSQLAEFAADMTEGVALNNVAIKPQAIFKAAMAALANAGTATKGIDQIASRGGGGGARDLIGAKGLVSDNIASSGGAVGDNIASSGGAVGDNIAVSGAASTPTVTTTTASSSIANSMTKTIGDDVRSDIVTPHASTTAVPQHSSINTTIPTSVSPNIKSTSLKEIIRDNQENEKEIDNTTRAQEKIKSSSKVSGLIDYSFNLKEHDNPTGIKQIRENAEIRDKRVEVEKAWNELVASGGGRIRDQQSEETSEQRTNAEKKWNEFVDSGVVTEIREIDNSVNNKLADKLDKSEKSKIEENKNIENNIKVYNTNTLPQEKVNNTDKSSGLIDYSFNLKEHDNPTGVKQIRENAEIRDKRVKVEKAWNELVASGGGRVKEQAGGKITERRANAEKVWDDLVKSGVVKEKKDNSSNENS</sequence>
<gene>
    <name type="ordered locus">RT0032</name>
</gene>
<reference key="1">
    <citation type="journal article" date="2004" name="J. Bacteriol.">
        <title>Complete genome sequence of Rickettsia typhi and comparison with sequences of other Rickettsiae.</title>
        <authorList>
            <person name="McLeod M.P."/>
            <person name="Qin X."/>
            <person name="Karpathy S.E."/>
            <person name="Gioia J."/>
            <person name="Highlander S.K."/>
            <person name="Fox G.E."/>
            <person name="McNeill T.Z."/>
            <person name="Jiang H."/>
            <person name="Muzny D."/>
            <person name="Jacob L.S."/>
            <person name="Hawes A.C."/>
            <person name="Sodergren E."/>
            <person name="Gill R."/>
            <person name="Hume J."/>
            <person name="Morgan M."/>
            <person name="Fan G."/>
            <person name="Amin A.G."/>
            <person name="Gibbs R.A."/>
            <person name="Hong C."/>
            <person name="Yu X.-J."/>
            <person name="Walker D.H."/>
            <person name="Weinstock G.M."/>
        </authorList>
    </citation>
    <scope>NUCLEOTIDE SEQUENCE [LARGE SCALE GENOMIC DNA]</scope>
    <source>
        <strain>ATCC VR-144 / Wilmington</strain>
    </source>
</reference>
<organism>
    <name type="scientific">Rickettsia typhi (strain ATCC VR-144 / Wilmington)</name>
    <dbReference type="NCBI Taxonomy" id="257363"/>
    <lineage>
        <taxon>Bacteria</taxon>
        <taxon>Pseudomonadati</taxon>
        <taxon>Pseudomonadota</taxon>
        <taxon>Alphaproteobacteria</taxon>
        <taxon>Rickettsiales</taxon>
        <taxon>Rickettsiaceae</taxon>
        <taxon>Rickettsieae</taxon>
        <taxon>Rickettsia</taxon>
        <taxon>typhus group</taxon>
    </lineage>
</organism>
<proteinExistence type="inferred from homology"/>
<keyword id="KW-1003">Cell membrane</keyword>
<keyword id="KW-0472">Membrane</keyword>
<keyword id="KW-0732">Signal</keyword>
<keyword id="KW-0812">Transmembrane</keyword>
<keyword id="KW-1133">Transmembrane helix</keyword>
<dbReference type="EMBL" id="AE017197">
    <property type="protein sequence ID" value="AAU03520.1"/>
    <property type="molecule type" value="Genomic_DNA"/>
</dbReference>
<dbReference type="RefSeq" id="WP_011190507.1">
    <property type="nucleotide sequence ID" value="NC_006142.1"/>
</dbReference>
<dbReference type="KEGG" id="rty:RT0032"/>
<dbReference type="eggNOG" id="COG3704">
    <property type="taxonomic scope" value="Bacteria"/>
</dbReference>
<dbReference type="HOGENOM" id="CLU_279905_0_0_5"/>
<dbReference type="OrthoDB" id="7163542at2"/>
<dbReference type="Proteomes" id="UP000000604">
    <property type="component" value="Chromosome"/>
</dbReference>
<dbReference type="GO" id="GO:0005886">
    <property type="term" value="C:plasma membrane"/>
    <property type="evidence" value="ECO:0007669"/>
    <property type="project" value="UniProtKB-SubCell"/>
</dbReference>
<dbReference type="GO" id="GO:0030255">
    <property type="term" value="P:protein secretion by the type IV secretion system"/>
    <property type="evidence" value="ECO:0007669"/>
    <property type="project" value="InterPro"/>
</dbReference>
<dbReference type="InterPro" id="IPR007688">
    <property type="entry name" value="Conjugal_tfr_TrbL/VirB6"/>
</dbReference>
<dbReference type="Pfam" id="PF04610">
    <property type="entry name" value="TrbL"/>
    <property type="match status" value="1"/>
</dbReference>
<evidence type="ECO:0000255" key="1"/>
<evidence type="ECO:0000305" key="2"/>
<comment type="subcellular location">
    <subcellularLocation>
        <location evidence="2">Cell membrane</location>
        <topology evidence="2">Multi-pass membrane protein</topology>
    </subcellularLocation>
</comment>
<comment type="similarity">
    <text evidence="2">Belongs to the TrbL/VirB6 family.</text>
</comment>
<protein>
    <recommendedName>
        <fullName>Uncharacterized protein RT0032</fullName>
    </recommendedName>
</protein>
<name>Y032_RICTY</name>
<feature type="signal peptide" evidence="1">
    <location>
        <begin position="1"/>
        <end position="28"/>
    </location>
</feature>
<feature type="chain" id="PRO_0000269206" description="Uncharacterized protein RT0032">
    <location>
        <begin position="29"/>
        <end position="1135"/>
    </location>
</feature>
<feature type="transmembrane region" description="Helical" evidence="1">
    <location>
        <begin position="332"/>
        <end position="352"/>
    </location>
</feature>
<feature type="transmembrane region" description="Helical" evidence="1">
    <location>
        <begin position="359"/>
        <end position="379"/>
    </location>
</feature>
<feature type="transmembrane region" description="Helical" evidence="1">
    <location>
        <begin position="393"/>
        <end position="413"/>
    </location>
</feature>
<feature type="transmembrane region" description="Helical" evidence="1">
    <location>
        <begin position="495"/>
        <end position="515"/>
    </location>
</feature>
<feature type="transmembrane region" description="Helical" evidence="1">
    <location>
        <begin position="522"/>
        <end position="542"/>
    </location>
</feature>
<feature type="transmembrane region" description="Helical" evidence="1">
    <location>
        <begin position="555"/>
        <end position="575"/>
    </location>
</feature>
<feature type="transmembrane region" description="Helical" evidence="1">
    <location>
        <begin position="700"/>
        <end position="720"/>
    </location>
</feature>